<evidence type="ECO:0000255" key="1">
    <source>
        <dbReference type="HAMAP-Rule" id="MF_00201"/>
    </source>
</evidence>
<feature type="chain" id="PRO_0000204966" description="DNA repair protein RecO">
    <location>
        <begin position="1"/>
        <end position="255"/>
    </location>
</feature>
<dbReference type="EMBL" id="AE017262">
    <property type="protein sequence ID" value="AAT04254.1"/>
    <property type="molecule type" value="Genomic_DNA"/>
</dbReference>
<dbReference type="RefSeq" id="WP_003726013.1">
    <property type="nucleotide sequence ID" value="NC_002973.6"/>
</dbReference>
<dbReference type="SMR" id="Q71ZL0"/>
<dbReference type="KEGG" id="lmf:LMOf2365_1479"/>
<dbReference type="HOGENOM" id="CLU_066632_4_0_9"/>
<dbReference type="GO" id="GO:0043590">
    <property type="term" value="C:bacterial nucleoid"/>
    <property type="evidence" value="ECO:0007669"/>
    <property type="project" value="TreeGrafter"/>
</dbReference>
<dbReference type="GO" id="GO:0006310">
    <property type="term" value="P:DNA recombination"/>
    <property type="evidence" value="ECO:0007669"/>
    <property type="project" value="UniProtKB-UniRule"/>
</dbReference>
<dbReference type="GO" id="GO:0006302">
    <property type="term" value="P:double-strand break repair"/>
    <property type="evidence" value="ECO:0007669"/>
    <property type="project" value="TreeGrafter"/>
</dbReference>
<dbReference type="Gene3D" id="2.40.50.140">
    <property type="entry name" value="Nucleic acid-binding proteins"/>
    <property type="match status" value="1"/>
</dbReference>
<dbReference type="Gene3D" id="1.20.1440.120">
    <property type="entry name" value="Recombination protein O, C-terminal domain"/>
    <property type="match status" value="1"/>
</dbReference>
<dbReference type="HAMAP" id="MF_00201">
    <property type="entry name" value="RecO"/>
    <property type="match status" value="1"/>
</dbReference>
<dbReference type="InterPro" id="IPR037278">
    <property type="entry name" value="ARFGAP/RecO"/>
</dbReference>
<dbReference type="InterPro" id="IPR022572">
    <property type="entry name" value="DNA_rep/recomb_RecO_N"/>
</dbReference>
<dbReference type="InterPro" id="IPR012340">
    <property type="entry name" value="NA-bd_OB-fold"/>
</dbReference>
<dbReference type="InterPro" id="IPR003717">
    <property type="entry name" value="RecO"/>
</dbReference>
<dbReference type="InterPro" id="IPR042242">
    <property type="entry name" value="RecO_C"/>
</dbReference>
<dbReference type="NCBIfam" id="TIGR00613">
    <property type="entry name" value="reco"/>
    <property type="match status" value="1"/>
</dbReference>
<dbReference type="PANTHER" id="PTHR33991">
    <property type="entry name" value="DNA REPAIR PROTEIN RECO"/>
    <property type="match status" value="1"/>
</dbReference>
<dbReference type="PANTHER" id="PTHR33991:SF1">
    <property type="entry name" value="DNA REPAIR PROTEIN RECO"/>
    <property type="match status" value="1"/>
</dbReference>
<dbReference type="Pfam" id="PF02565">
    <property type="entry name" value="RecO_C"/>
    <property type="match status" value="1"/>
</dbReference>
<dbReference type="Pfam" id="PF11967">
    <property type="entry name" value="RecO_N"/>
    <property type="match status" value="1"/>
</dbReference>
<dbReference type="SUPFAM" id="SSF57863">
    <property type="entry name" value="ArfGap/RecO-like zinc finger"/>
    <property type="match status" value="1"/>
</dbReference>
<dbReference type="SUPFAM" id="SSF50249">
    <property type="entry name" value="Nucleic acid-binding proteins"/>
    <property type="match status" value="1"/>
</dbReference>
<name>RECO_LISMF</name>
<protein>
    <recommendedName>
        <fullName evidence="1">DNA repair protein RecO</fullName>
    </recommendedName>
    <alternativeName>
        <fullName evidence="1">Recombination protein O</fullName>
    </alternativeName>
</protein>
<organism>
    <name type="scientific">Listeria monocytogenes serotype 4b (strain F2365)</name>
    <dbReference type="NCBI Taxonomy" id="265669"/>
    <lineage>
        <taxon>Bacteria</taxon>
        <taxon>Bacillati</taxon>
        <taxon>Bacillota</taxon>
        <taxon>Bacilli</taxon>
        <taxon>Bacillales</taxon>
        <taxon>Listeriaceae</taxon>
        <taxon>Listeria</taxon>
    </lineage>
</organism>
<proteinExistence type="inferred from homology"/>
<accession>Q71ZL0</accession>
<gene>
    <name evidence="1" type="primary">recO</name>
    <name type="ordered locus">LMOf2365_1479</name>
</gene>
<comment type="function">
    <text evidence="1">Involved in DNA repair and RecF pathway recombination.</text>
</comment>
<comment type="similarity">
    <text evidence="1">Belongs to the RecO family.</text>
</comment>
<sequence length="255" mass="29834">MEKCEGIVIRQTSYRESDKIVRMYTREFGKIGVVARGAKKTKSRLAAVTQLFTNGYFTFFGSNGLGTLQQGEVIENFSSIQQDIFMTAYATYVCELLDKATEERQPNPYLYELTFQILRDINEGYDPQILTQIFEMKMLPVLGLYPTMDKCAICGETTGHFDFSTSSNGIICHRCFEKDRYRMHLPENVVKLLRLFFIFQLDRLGNIDVKPETKEWLQKAIDTYYDEYSGLYLKSRKFLREMDKWENMLKKDSDD</sequence>
<reference key="1">
    <citation type="journal article" date="2004" name="Nucleic Acids Res.">
        <title>Whole genome comparisons of serotype 4b and 1/2a strains of the food-borne pathogen Listeria monocytogenes reveal new insights into the core genome components of this species.</title>
        <authorList>
            <person name="Nelson K.E."/>
            <person name="Fouts D.E."/>
            <person name="Mongodin E.F."/>
            <person name="Ravel J."/>
            <person name="DeBoy R.T."/>
            <person name="Kolonay J.F."/>
            <person name="Rasko D.A."/>
            <person name="Angiuoli S.V."/>
            <person name="Gill S.R."/>
            <person name="Paulsen I.T."/>
            <person name="Peterson J.D."/>
            <person name="White O."/>
            <person name="Nelson W.C."/>
            <person name="Nierman W.C."/>
            <person name="Beanan M.J."/>
            <person name="Brinkac L.M."/>
            <person name="Daugherty S.C."/>
            <person name="Dodson R.J."/>
            <person name="Durkin A.S."/>
            <person name="Madupu R."/>
            <person name="Haft D.H."/>
            <person name="Selengut J."/>
            <person name="Van Aken S.E."/>
            <person name="Khouri H.M."/>
            <person name="Fedorova N."/>
            <person name="Forberger H.A."/>
            <person name="Tran B."/>
            <person name="Kathariou S."/>
            <person name="Wonderling L.D."/>
            <person name="Uhlich G.A."/>
            <person name="Bayles D.O."/>
            <person name="Luchansky J.B."/>
            <person name="Fraser C.M."/>
        </authorList>
    </citation>
    <scope>NUCLEOTIDE SEQUENCE [LARGE SCALE GENOMIC DNA]</scope>
    <source>
        <strain>F2365</strain>
    </source>
</reference>
<keyword id="KW-0227">DNA damage</keyword>
<keyword id="KW-0233">DNA recombination</keyword>
<keyword id="KW-0234">DNA repair</keyword>